<comment type="function">
    <text evidence="5">Component of the ribosome, a large ribonucleoprotein complex responsible for the synthesis of proteins in the cell. The small ribosomal subunit (SSU) binds messenger RNAs (mRNAs) and translates the encoded message by selecting cognate aminoacyl-transfer RNA (tRNA) molecules. The large subunit (LSU) contains the ribosomal catalytic site termed the peptidyl transferase center (PTC), which catalyzes the formation of peptide bonds, thereby polymerizing the amino acids delivered by tRNAs into a polypeptide chain. The nascent polypeptides leave the ribosome through a tunnel in the LSU and interact with protein factors that function in enzymatic processing, targeting, and the membrane insertion of nascent chains at the exit of the ribosomal tunnel.</text>
</comment>
<comment type="subunit">
    <text evidence="2">Component of the small ribosomal subunit (PubMed:35613268). Mature ribosomes consist of a small (40S) and a large (60S) subunit (PubMed:35613268). The 40S subunit contains about 32 different proteins and 1 molecule of RNA (18S) (PubMed:35613268). The 60S subunit contains 45 different proteins and 3 molecules of RNA (25S, 5.8S and 5S) (PubMed:35613268).</text>
</comment>
<comment type="subcellular location">
    <subcellularLocation>
        <location evidence="5">Cytoplasm</location>
    </subcellularLocation>
</comment>
<comment type="similarity">
    <text evidence="4">Belongs to the eukaryotic ribosomal protein eS10 family.</text>
</comment>
<gene>
    <name type="primary">RPS10</name>
    <name type="ordered locus">orf19.2179.2</name>
    <name type="ORF">CAALFM_C208040CA</name>
</gene>
<keyword id="KW-0002">3D-structure</keyword>
<keyword id="KW-0963">Cytoplasm</keyword>
<keyword id="KW-1185">Reference proteome</keyword>
<keyword id="KW-0687">Ribonucleoprotein</keyword>
<keyword id="KW-0689">Ribosomal protein</keyword>
<dbReference type="EMBL" id="CP017624">
    <property type="protein sequence ID" value="AOW27798.1"/>
    <property type="molecule type" value="Genomic_DNA"/>
</dbReference>
<dbReference type="RefSeq" id="XP_019330801.1">
    <property type="nucleotide sequence ID" value="XM_019475256.1"/>
</dbReference>
<dbReference type="PDB" id="7PZY">
    <property type="method" value="EM"/>
    <property type="resolution" value="2.32 A"/>
    <property type="chains" value="L=1-118"/>
</dbReference>
<dbReference type="PDB" id="7Q08">
    <property type="method" value="EM"/>
    <property type="resolution" value="2.56 A"/>
    <property type="chains" value="L=1-118"/>
</dbReference>
<dbReference type="PDB" id="7Q0F">
    <property type="method" value="EM"/>
    <property type="resolution" value="2.64 A"/>
    <property type="chains" value="L=1-118"/>
</dbReference>
<dbReference type="PDB" id="7Q0P">
    <property type="method" value="EM"/>
    <property type="resolution" value="2.77 A"/>
    <property type="chains" value="L=1-118"/>
</dbReference>
<dbReference type="PDB" id="7Q0R">
    <property type="method" value="EM"/>
    <property type="resolution" value="2.67 A"/>
    <property type="chains" value="L=1-118"/>
</dbReference>
<dbReference type="PDB" id="8C3A">
    <property type="method" value="X-ray"/>
    <property type="resolution" value="3.00 A"/>
    <property type="chains" value="CX/M=1-118"/>
</dbReference>
<dbReference type="PDB" id="8OGJ">
    <property type="method" value="EM"/>
    <property type="resolution" value="3.10 A"/>
    <property type="chains" value="L=1-118"/>
</dbReference>
<dbReference type="PDB" id="8OH6">
    <property type="method" value="X-ray"/>
    <property type="resolution" value="3.35 A"/>
    <property type="chains" value="CX/M=1-118"/>
</dbReference>
<dbReference type="PDB" id="8OI5">
    <property type="method" value="X-ray"/>
    <property type="resolution" value="2.90 A"/>
    <property type="chains" value="CX/M=1-118"/>
</dbReference>
<dbReference type="PDB" id="8OJ3">
    <property type="method" value="X-ray"/>
    <property type="resolution" value="3.50 A"/>
    <property type="chains" value="CX/M=1-118"/>
</dbReference>
<dbReference type="PDBsum" id="7PZY"/>
<dbReference type="PDBsum" id="7Q08"/>
<dbReference type="PDBsum" id="7Q0F"/>
<dbReference type="PDBsum" id="7Q0P"/>
<dbReference type="PDBsum" id="7Q0R"/>
<dbReference type="PDBsum" id="8C3A"/>
<dbReference type="PDBsum" id="8OGJ"/>
<dbReference type="PDBsum" id="8OH6"/>
<dbReference type="PDBsum" id="8OI5"/>
<dbReference type="PDBsum" id="8OJ3"/>
<dbReference type="EMDB" id="EMD-13737"/>
<dbReference type="EMDB" id="EMD-13741"/>
<dbReference type="EMDB" id="EMD-13744"/>
<dbReference type="EMDB" id="EMD-13749"/>
<dbReference type="EMDB" id="EMD-13750"/>
<dbReference type="SMR" id="A0A1D8PI15"/>
<dbReference type="FunCoup" id="A0A1D8PI15">
    <property type="interactions" value="1018"/>
</dbReference>
<dbReference type="STRING" id="237561.A0A1D8PI15"/>
<dbReference type="EnsemblFungi" id="C2_08040C_A-T">
    <property type="protein sequence ID" value="C2_08040C_A-T-p1"/>
    <property type="gene ID" value="C2_08040C_A"/>
</dbReference>
<dbReference type="GeneID" id="30515149"/>
<dbReference type="KEGG" id="cal:CAALFM_C208040CA"/>
<dbReference type="CGD" id="CAL0000177647">
    <property type="gene designation" value="RPS10"/>
</dbReference>
<dbReference type="VEuPathDB" id="FungiDB:C2_08040C_A"/>
<dbReference type="eggNOG" id="KOG3344">
    <property type="taxonomic scope" value="Eukaryota"/>
</dbReference>
<dbReference type="InParanoid" id="A0A1D8PI15"/>
<dbReference type="OMA" id="ERTKIHR"/>
<dbReference type="OrthoDB" id="5211809at2759"/>
<dbReference type="Proteomes" id="UP000000559">
    <property type="component" value="Chromosome 2"/>
</dbReference>
<dbReference type="GO" id="GO:0009986">
    <property type="term" value="C:cell surface"/>
    <property type="evidence" value="ECO:0000314"/>
    <property type="project" value="CGD"/>
</dbReference>
<dbReference type="GO" id="GO:0022627">
    <property type="term" value="C:cytosolic small ribosomal subunit"/>
    <property type="evidence" value="ECO:0000318"/>
    <property type="project" value="GO_Central"/>
</dbReference>
<dbReference type="GO" id="GO:0003723">
    <property type="term" value="F:RNA binding"/>
    <property type="evidence" value="ECO:0000318"/>
    <property type="project" value="GO_Central"/>
</dbReference>
<dbReference type="GO" id="GO:0003735">
    <property type="term" value="F:structural constituent of ribosome"/>
    <property type="evidence" value="ECO:0000318"/>
    <property type="project" value="GO_Central"/>
</dbReference>
<dbReference type="FunFam" id="1.10.10.10:FF:000025">
    <property type="entry name" value="40S ribosomal protein S10"/>
    <property type="match status" value="1"/>
</dbReference>
<dbReference type="Gene3D" id="1.10.10.10">
    <property type="entry name" value="Winged helix-like DNA-binding domain superfamily/Winged helix DNA-binding domain"/>
    <property type="match status" value="1"/>
</dbReference>
<dbReference type="InterPro" id="IPR005326">
    <property type="entry name" value="Plectin_eS10_N"/>
</dbReference>
<dbReference type="InterPro" id="IPR037447">
    <property type="entry name" value="Ribosomal_eS10"/>
</dbReference>
<dbReference type="InterPro" id="IPR036388">
    <property type="entry name" value="WH-like_DNA-bd_sf"/>
</dbReference>
<dbReference type="PANTHER" id="PTHR12146">
    <property type="entry name" value="40S RIBOSOMAL PROTEIN S10"/>
    <property type="match status" value="1"/>
</dbReference>
<dbReference type="PANTHER" id="PTHR12146:SF0">
    <property type="entry name" value="RIBOSOMAL PROTEIN S10"/>
    <property type="match status" value="1"/>
</dbReference>
<dbReference type="Pfam" id="PF03501">
    <property type="entry name" value="S10_plectin"/>
    <property type="match status" value="1"/>
</dbReference>
<protein>
    <recommendedName>
        <fullName evidence="3">Small ribosomal subunit protein eS10</fullName>
    </recommendedName>
    <alternativeName>
        <fullName>40S ribosomal protein S10A</fullName>
    </alternativeName>
</protein>
<accession>A0A1D8PI15</accession>
<proteinExistence type="evidence at protein level"/>
<reference key="1">
    <citation type="journal article" date="2004" name="Proc. Natl. Acad. Sci. U.S.A.">
        <title>The diploid genome sequence of Candida albicans.</title>
        <authorList>
            <person name="Jones T."/>
            <person name="Federspiel N.A."/>
            <person name="Chibana H."/>
            <person name="Dungan J."/>
            <person name="Kalman S."/>
            <person name="Magee B.B."/>
            <person name="Newport G."/>
            <person name="Thorstenson Y.R."/>
            <person name="Agabian N."/>
            <person name="Magee P.T."/>
            <person name="Davis R.W."/>
            <person name="Scherer S."/>
        </authorList>
    </citation>
    <scope>NUCLEOTIDE SEQUENCE [LARGE SCALE GENOMIC DNA]</scope>
    <source>
        <strain>SC5314 / ATCC MYA-2876</strain>
    </source>
</reference>
<reference key="2">
    <citation type="journal article" date="2007" name="Genome Biol.">
        <title>Assembly of the Candida albicans genome into sixteen supercontigs aligned on the eight chromosomes.</title>
        <authorList>
            <person name="van het Hoog M."/>
            <person name="Rast T.J."/>
            <person name="Martchenko M."/>
            <person name="Grindle S."/>
            <person name="Dignard D."/>
            <person name="Hogues H."/>
            <person name="Cuomo C."/>
            <person name="Berriman M."/>
            <person name="Scherer S."/>
            <person name="Magee B.B."/>
            <person name="Whiteway M."/>
            <person name="Chibana H."/>
            <person name="Nantel A."/>
            <person name="Magee P.T."/>
        </authorList>
    </citation>
    <scope>GENOME REANNOTATION</scope>
    <source>
        <strain>SC5314 / ATCC MYA-2876</strain>
    </source>
</reference>
<reference key="3">
    <citation type="journal article" date="2013" name="Genome Biol.">
        <title>Assembly of a phased diploid Candida albicans genome facilitates allele-specific measurements and provides a simple model for repeat and indel structure.</title>
        <authorList>
            <person name="Muzzey D."/>
            <person name="Schwartz K."/>
            <person name="Weissman J.S."/>
            <person name="Sherlock G."/>
        </authorList>
    </citation>
    <scope>NUCLEOTIDE SEQUENCE [LARGE SCALE GENOMIC DNA]</scope>
    <scope>GENOME REANNOTATION</scope>
    <source>
        <strain>SC5314 / ATCC MYA-2876</strain>
    </source>
</reference>
<reference evidence="6 7 8" key="4">
    <citation type="journal article" date="2022" name="Sci. Adv.">
        <title>E-site drug specificity of the human pathogen Candida albicans ribosome.</title>
        <authorList>
            <person name="Zgadzay Y."/>
            <person name="Kolosova O."/>
            <person name="Stetsenko A."/>
            <person name="Wu C."/>
            <person name="Bruchlen D."/>
            <person name="Usachev K."/>
            <person name="Validov S."/>
            <person name="Jenner L."/>
            <person name="Rogachev A."/>
            <person name="Yusupova G."/>
            <person name="Sachs M.S."/>
            <person name="Guskov A."/>
            <person name="Yusupov M."/>
        </authorList>
    </citation>
    <scope>STRUCTURE BY ELECTRON MICROSCOPY (2.32 ANGSTROMS) OF THE 80S RIBOSOME</scope>
    <scope>SUBUNIT</scope>
</reference>
<name>RS10A_CANAL</name>
<evidence type="ECO:0000256" key="1">
    <source>
        <dbReference type="SAM" id="MobiDB-lite"/>
    </source>
</evidence>
<evidence type="ECO:0000269" key="2">
    <source>
    </source>
</evidence>
<evidence type="ECO:0000303" key="3">
    <source>
    </source>
</evidence>
<evidence type="ECO:0000305" key="4"/>
<evidence type="ECO:0000305" key="5">
    <source>
    </source>
</evidence>
<evidence type="ECO:0007744" key="6">
    <source>
        <dbReference type="PDB" id="7PZY"/>
    </source>
</evidence>
<evidence type="ECO:0007744" key="7">
    <source>
        <dbReference type="PDB" id="7Q0F"/>
    </source>
</evidence>
<evidence type="ECO:0007744" key="8">
    <source>
        <dbReference type="PDB" id="7Q0P"/>
    </source>
</evidence>
<feature type="chain" id="PRO_0000456548" description="Small ribosomal subunit protein eS10">
    <location>
        <begin position="1"/>
        <end position="118"/>
    </location>
</feature>
<feature type="region of interest" description="Disordered" evidence="1">
    <location>
        <begin position="91"/>
        <end position="118"/>
    </location>
</feature>
<feature type="compositionally biased region" description="Basic residues" evidence="1">
    <location>
        <begin position="106"/>
        <end position="118"/>
    </location>
</feature>
<organism>
    <name type="scientific">Candida albicans (strain SC5314 / ATCC MYA-2876)</name>
    <name type="common">Yeast</name>
    <dbReference type="NCBI Taxonomy" id="237561"/>
    <lineage>
        <taxon>Eukaryota</taxon>
        <taxon>Fungi</taxon>
        <taxon>Dikarya</taxon>
        <taxon>Ascomycota</taxon>
        <taxon>Saccharomycotina</taxon>
        <taxon>Pichiomycetes</taxon>
        <taxon>Debaryomycetaceae</taxon>
        <taxon>Candida/Lodderomyces clade</taxon>
        <taxon>Candida</taxon>
    </lineage>
</organism>
<sequence>MLIPKEDRKKIHQYLFQEGVVVAKKDFNQPKHDEIDTRNLFVIKALQSLTSKGYVKTQFSWQYYYYTLTDEGVEFLRTELNIPEGILPLTRLKNAPAERPRPSRGGPRRGGYRGRARD</sequence>